<evidence type="ECO:0000250" key="1"/>
<evidence type="ECO:0000255" key="2"/>
<evidence type="ECO:0000256" key="3">
    <source>
        <dbReference type="SAM" id="MobiDB-lite"/>
    </source>
</evidence>
<evidence type="ECO:0000305" key="4"/>
<comment type="function">
    <text evidence="1">Plays a major role in decreasing resistance to glycopeptide antibiotics.</text>
</comment>
<comment type="subcellular location">
    <subcellularLocation>
        <location evidence="1">Cell membrane</location>
        <topology evidence="1">Single-pass membrane protein</topology>
    </subcellularLocation>
</comment>
<comment type="similarity">
    <text evidence="4">Belongs to the TcaA family.</text>
</comment>
<organism>
    <name type="scientific">Staphylococcus aureus (strain MRSA252)</name>
    <dbReference type="NCBI Taxonomy" id="282458"/>
    <lineage>
        <taxon>Bacteria</taxon>
        <taxon>Bacillati</taxon>
        <taxon>Bacillota</taxon>
        <taxon>Bacilli</taxon>
        <taxon>Bacillales</taxon>
        <taxon>Staphylococcaceae</taxon>
        <taxon>Staphylococcus</taxon>
    </lineage>
</organism>
<accession>Q6GE78</accession>
<reference key="1">
    <citation type="journal article" date="2004" name="Proc. Natl. Acad. Sci. U.S.A.">
        <title>Complete genomes of two clinical Staphylococcus aureus strains: evidence for the rapid evolution of virulence and drug resistance.</title>
        <authorList>
            <person name="Holden M.T.G."/>
            <person name="Feil E.J."/>
            <person name="Lindsay J.A."/>
            <person name="Peacock S.J."/>
            <person name="Day N.P.J."/>
            <person name="Enright M.C."/>
            <person name="Foster T.J."/>
            <person name="Moore C.E."/>
            <person name="Hurst L."/>
            <person name="Atkin R."/>
            <person name="Barron A."/>
            <person name="Bason N."/>
            <person name="Bentley S.D."/>
            <person name="Chillingworth C."/>
            <person name="Chillingworth T."/>
            <person name="Churcher C."/>
            <person name="Clark L."/>
            <person name="Corton C."/>
            <person name="Cronin A."/>
            <person name="Doggett J."/>
            <person name="Dowd L."/>
            <person name="Feltwell T."/>
            <person name="Hance Z."/>
            <person name="Harris B."/>
            <person name="Hauser H."/>
            <person name="Holroyd S."/>
            <person name="Jagels K."/>
            <person name="James K.D."/>
            <person name="Lennard N."/>
            <person name="Line A."/>
            <person name="Mayes R."/>
            <person name="Moule S."/>
            <person name="Mungall K."/>
            <person name="Ormond D."/>
            <person name="Quail M.A."/>
            <person name="Rabbinowitsch E."/>
            <person name="Rutherford K.M."/>
            <person name="Sanders M."/>
            <person name="Sharp S."/>
            <person name="Simmonds M."/>
            <person name="Stevens K."/>
            <person name="Whitehead S."/>
            <person name="Barrell B.G."/>
            <person name="Spratt B.G."/>
            <person name="Parkhill J."/>
        </authorList>
    </citation>
    <scope>NUCLEOTIDE SEQUENCE [LARGE SCALE GENOMIC DNA]</scope>
    <source>
        <strain>MRSA252</strain>
    </source>
</reference>
<feature type="chain" id="PRO_0000333163" description="Membrane-associated protein TcaA">
    <location>
        <begin position="1"/>
        <end position="460"/>
    </location>
</feature>
<feature type="topological domain" description="Cytoplasmic" evidence="2">
    <location>
        <begin position="1"/>
        <end position="49"/>
    </location>
</feature>
<feature type="transmembrane region" description="Helical" evidence="2">
    <location>
        <begin position="50"/>
        <end position="70"/>
    </location>
</feature>
<feature type="topological domain" description="Extracellular" evidence="2">
    <location>
        <begin position="71"/>
        <end position="460"/>
    </location>
</feature>
<feature type="zinc finger region" description="C4-type" evidence="2">
    <location>
        <begin position="4"/>
        <end position="21"/>
    </location>
</feature>
<feature type="region of interest" description="Disordered" evidence="3">
    <location>
        <begin position="439"/>
        <end position="460"/>
    </location>
</feature>
<sequence length="460" mass="52085">MKSCPKCGQQAQDDVQICTQCGHKFDSRQALYRKSTDEDIQTNNIKMRKMVPWAIGFFILILIIILFFLLRNFNSPEAQTKILVNAIENNDKQKVATLLSTKDNKVDSEEAKVYINYIKDEVGLKQFVSDLKNTVHKLNKSKTSVASYIQTRSGQNILRVSKNGTRYIFFDNMSFTAPTKQPIVKPKEKTKYEFKSGGKKKMVIAEANKVTPIGNFIPGTYRIPAMKSTENGDFAGHLKFDFRQSNSETVDVTEDFEEANITVTLKGDTKLNDSSKKVTINDREMAFSSSKTYGPYPQNKDITISASGKAKGKTFTTQTKTIKASDLKYNTEITLNFDSEDIEDYVEKKEKEENSLKNKLIEFFAGYSLANNAAFNQSDFDFVSSYIKKGSSFYDDVKKRVSKGSLMMISSPQIIDAEKHGDKITATVRLVNENGKQVDKEYELEQGPQDRLQLIKTSEK</sequence>
<gene>
    <name type="primary">tcaA</name>
    <name type="ordered locus">SAR2442</name>
</gene>
<protein>
    <recommendedName>
        <fullName>Membrane-associated protein TcaA</fullName>
    </recommendedName>
</protein>
<name>TCAA_STAAR</name>
<keyword id="KW-0046">Antibiotic resistance</keyword>
<keyword id="KW-1003">Cell membrane</keyword>
<keyword id="KW-0472">Membrane</keyword>
<keyword id="KW-0479">Metal-binding</keyword>
<keyword id="KW-0812">Transmembrane</keyword>
<keyword id="KW-1133">Transmembrane helix</keyword>
<keyword id="KW-0862">Zinc</keyword>
<keyword id="KW-0863">Zinc-finger</keyword>
<dbReference type="EMBL" id="BX571856">
    <property type="protein sequence ID" value="CAG41424.1"/>
    <property type="molecule type" value="Genomic_DNA"/>
</dbReference>
<dbReference type="RefSeq" id="WP_000833805.1">
    <property type="nucleotide sequence ID" value="NC_002952.2"/>
</dbReference>
<dbReference type="SMR" id="Q6GE78"/>
<dbReference type="KEGG" id="sar:SAR2442"/>
<dbReference type="HOGENOM" id="CLU_047245_0_0_9"/>
<dbReference type="Proteomes" id="UP000000596">
    <property type="component" value="Chromosome"/>
</dbReference>
<dbReference type="GO" id="GO:0005886">
    <property type="term" value="C:plasma membrane"/>
    <property type="evidence" value="ECO:0007669"/>
    <property type="project" value="UniProtKB-SubCell"/>
</dbReference>
<dbReference type="GO" id="GO:0008270">
    <property type="term" value="F:zinc ion binding"/>
    <property type="evidence" value="ECO:0007669"/>
    <property type="project" value="UniProtKB-KW"/>
</dbReference>
<dbReference type="GO" id="GO:0046677">
    <property type="term" value="P:response to antibiotic"/>
    <property type="evidence" value="ECO:0007669"/>
    <property type="project" value="UniProtKB-KW"/>
</dbReference>
<dbReference type="InterPro" id="IPR023599">
    <property type="entry name" value="Mem_prot_TcaA"/>
</dbReference>
<dbReference type="InterPro" id="IPR054529">
    <property type="entry name" value="TcaA_2nd"/>
</dbReference>
<dbReference type="InterPro" id="IPR054530">
    <property type="entry name" value="TcaA_4th"/>
</dbReference>
<dbReference type="PANTHER" id="PTHR40038">
    <property type="entry name" value="MEMBRANE-ASSOCIATED PROTEIN TCAA"/>
    <property type="match status" value="1"/>
</dbReference>
<dbReference type="PANTHER" id="PTHR40038:SF1">
    <property type="entry name" value="MEMBRANE-ASSOCIATED PROTEIN TCAA"/>
    <property type="match status" value="1"/>
</dbReference>
<dbReference type="Pfam" id="PF22813">
    <property type="entry name" value="TcaA_2nd"/>
    <property type="match status" value="1"/>
</dbReference>
<dbReference type="Pfam" id="PF22820">
    <property type="entry name" value="TcaA_3rd_4th"/>
    <property type="match status" value="1"/>
</dbReference>
<dbReference type="Pfam" id="PF22819">
    <property type="entry name" value="TcaA_5th"/>
    <property type="match status" value="1"/>
</dbReference>
<dbReference type="PIRSF" id="PIRSF032522">
    <property type="entry name" value="TcaA"/>
    <property type="match status" value="1"/>
</dbReference>
<proteinExistence type="inferred from homology"/>